<name>CH60_ENTFA</name>
<protein>
    <recommendedName>
        <fullName evidence="1">Chaperonin GroEL</fullName>
        <ecNumber evidence="1">5.6.1.7</ecNumber>
    </recommendedName>
    <alternativeName>
        <fullName evidence="1">60 kDa chaperonin</fullName>
    </alternativeName>
    <alternativeName>
        <fullName evidence="1">Chaperonin-60</fullName>
        <shortName evidence="1">Cpn60</shortName>
    </alternativeName>
</protein>
<dbReference type="EC" id="5.6.1.7" evidence="1"/>
<dbReference type="EMBL" id="AF335185">
    <property type="protein sequence ID" value="AAL04033.1"/>
    <property type="molecule type" value="Genomic_DNA"/>
</dbReference>
<dbReference type="EMBL" id="AE016830">
    <property type="protein sequence ID" value="AAO82342.1"/>
    <property type="molecule type" value="Genomic_DNA"/>
</dbReference>
<dbReference type="RefSeq" id="NP_816272.1">
    <property type="nucleotide sequence ID" value="NC_004668.1"/>
</dbReference>
<dbReference type="RefSeq" id="WP_002362559.1">
    <property type="nucleotide sequence ID" value="NZ_KE136528.1"/>
</dbReference>
<dbReference type="SMR" id="Q93EU6"/>
<dbReference type="STRING" id="226185.EF_2633"/>
<dbReference type="EnsemblBacteria" id="AAO82342">
    <property type="protein sequence ID" value="AAO82342"/>
    <property type="gene ID" value="EF_2633"/>
</dbReference>
<dbReference type="GeneID" id="60894630"/>
<dbReference type="KEGG" id="efa:EF2633"/>
<dbReference type="PATRIC" id="fig|226185.45.peg.926"/>
<dbReference type="eggNOG" id="COG0459">
    <property type="taxonomic scope" value="Bacteria"/>
</dbReference>
<dbReference type="HOGENOM" id="CLU_016503_3_0_9"/>
<dbReference type="Proteomes" id="UP000001415">
    <property type="component" value="Chromosome"/>
</dbReference>
<dbReference type="GO" id="GO:0005737">
    <property type="term" value="C:cytoplasm"/>
    <property type="evidence" value="ECO:0007669"/>
    <property type="project" value="UniProtKB-SubCell"/>
</dbReference>
<dbReference type="GO" id="GO:0005524">
    <property type="term" value="F:ATP binding"/>
    <property type="evidence" value="ECO:0007669"/>
    <property type="project" value="UniProtKB-UniRule"/>
</dbReference>
<dbReference type="GO" id="GO:0140662">
    <property type="term" value="F:ATP-dependent protein folding chaperone"/>
    <property type="evidence" value="ECO:0007669"/>
    <property type="project" value="InterPro"/>
</dbReference>
<dbReference type="GO" id="GO:0016853">
    <property type="term" value="F:isomerase activity"/>
    <property type="evidence" value="ECO:0007669"/>
    <property type="project" value="UniProtKB-KW"/>
</dbReference>
<dbReference type="GO" id="GO:0051082">
    <property type="term" value="F:unfolded protein binding"/>
    <property type="evidence" value="ECO:0007669"/>
    <property type="project" value="UniProtKB-UniRule"/>
</dbReference>
<dbReference type="GO" id="GO:0042026">
    <property type="term" value="P:protein refolding"/>
    <property type="evidence" value="ECO:0007669"/>
    <property type="project" value="UniProtKB-UniRule"/>
</dbReference>
<dbReference type="CDD" id="cd03344">
    <property type="entry name" value="GroEL"/>
    <property type="match status" value="1"/>
</dbReference>
<dbReference type="FunFam" id="1.10.560.10:FF:000001">
    <property type="entry name" value="60 kDa chaperonin"/>
    <property type="match status" value="1"/>
</dbReference>
<dbReference type="FunFam" id="3.50.7.10:FF:000001">
    <property type="entry name" value="60 kDa chaperonin"/>
    <property type="match status" value="1"/>
</dbReference>
<dbReference type="Gene3D" id="3.50.7.10">
    <property type="entry name" value="GroEL"/>
    <property type="match status" value="1"/>
</dbReference>
<dbReference type="Gene3D" id="1.10.560.10">
    <property type="entry name" value="GroEL-like equatorial domain"/>
    <property type="match status" value="1"/>
</dbReference>
<dbReference type="Gene3D" id="3.30.260.10">
    <property type="entry name" value="TCP-1-like chaperonin intermediate domain"/>
    <property type="match status" value="1"/>
</dbReference>
<dbReference type="HAMAP" id="MF_00600">
    <property type="entry name" value="CH60"/>
    <property type="match status" value="1"/>
</dbReference>
<dbReference type="InterPro" id="IPR018370">
    <property type="entry name" value="Chaperonin_Cpn60_CS"/>
</dbReference>
<dbReference type="InterPro" id="IPR001844">
    <property type="entry name" value="Cpn60/GroEL"/>
</dbReference>
<dbReference type="InterPro" id="IPR002423">
    <property type="entry name" value="Cpn60/GroEL/TCP-1"/>
</dbReference>
<dbReference type="InterPro" id="IPR027409">
    <property type="entry name" value="GroEL-like_apical_dom_sf"/>
</dbReference>
<dbReference type="InterPro" id="IPR027413">
    <property type="entry name" value="GROEL-like_equatorial_sf"/>
</dbReference>
<dbReference type="InterPro" id="IPR027410">
    <property type="entry name" value="TCP-1-like_intermed_sf"/>
</dbReference>
<dbReference type="NCBIfam" id="TIGR02348">
    <property type="entry name" value="GroEL"/>
    <property type="match status" value="1"/>
</dbReference>
<dbReference type="NCBIfam" id="NF000592">
    <property type="entry name" value="PRK00013.1"/>
    <property type="match status" value="1"/>
</dbReference>
<dbReference type="NCBIfam" id="NF009487">
    <property type="entry name" value="PRK12849.1"/>
    <property type="match status" value="1"/>
</dbReference>
<dbReference type="NCBIfam" id="NF009488">
    <property type="entry name" value="PRK12850.1"/>
    <property type="match status" value="1"/>
</dbReference>
<dbReference type="NCBIfam" id="NF009489">
    <property type="entry name" value="PRK12851.1"/>
    <property type="match status" value="1"/>
</dbReference>
<dbReference type="PANTHER" id="PTHR45633">
    <property type="entry name" value="60 KDA HEAT SHOCK PROTEIN, MITOCHONDRIAL"/>
    <property type="match status" value="1"/>
</dbReference>
<dbReference type="Pfam" id="PF00118">
    <property type="entry name" value="Cpn60_TCP1"/>
    <property type="match status" value="1"/>
</dbReference>
<dbReference type="PRINTS" id="PR00298">
    <property type="entry name" value="CHAPERONIN60"/>
</dbReference>
<dbReference type="SUPFAM" id="SSF52029">
    <property type="entry name" value="GroEL apical domain-like"/>
    <property type="match status" value="1"/>
</dbReference>
<dbReference type="SUPFAM" id="SSF48592">
    <property type="entry name" value="GroEL equatorial domain-like"/>
    <property type="match status" value="1"/>
</dbReference>
<dbReference type="SUPFAM" id="SSF54849">
    <property type="entry name" value="GroEL-intermediate domain like"/>
    <property type="match status" value="1"/>
</dbReference>
<dbReference type="PROSITE" id="PS00296">
    <property type="entry name" value="CHAPERONINS_CPN60"/>
    <property type="match status" value="1"/>
</dbReference>
<reference key="1">
    <citation type="journal article" date="2001" name="J. Clin. Microbiol.">
        <title>Determination of Enterococcus faecalis groESL full-length sequence and application for species identification.</title>
        <authorList>
            <person name="Teng L.-J."/>
            <person name="Hsueh P.R."/>
            <person name="Wang Y.H."/>
            <person name="Lin H.M."/>
            <person name="Luh K.T."/>
            <person name="Ho S.W."/>
        </authorList>
    </citation>
    <scope>NUCLEOTIDE SEQUENCE [GENOMIC DNA]</scope>
    <source>
        <strain>ATCC 29212 / DSM 2570</strain>
    </source>
</reference>
<reference key="2">
    <citation type="journal article" date="2003" name="Science">
        <title>Role of mobile DNA in the evolution of vancomycin-resistant Enterococcus faecalis.</title>
        <authorList>
            <person name="Paulsen I.T."/>
            <person name="Banerjei L."/>
            <person name="Myers G.S.A."/>
            <person name="Nelson K.E."/>
            <person name="Seshadri R."/>
            <person name="Read T.D."/>
            <person name="Fouts D.E."/>
            <person name="Eisen J.A."/>
            <person name="Gill S.R."/>
            <person name="Heidelberg J.F."/>
            <person name="Tettelin H."/>
            <person name="Dodson R.J."/>
            <person name="Umayam L.A."/>
            <person name="Brinkac L.M."/>
            <person name="Beanan M.J."/>
            <person name="Daugherty S.C."/>
            <person name="DeBoy R.T."/>
            <person name="Durkin S.A."/>
            <person name="Kolonay J.F."/>
            <person name="Madupu R."/>
            <person name="Nelson W.C."/>
            <person name="Vamathevan J.J."/>
            <person name="Tran B."/>
            <person name="Upton J."/>
            <person name="Hansen T."/>
            <person name="Shetty J."/>
            <person name="Khouri H.M."/>
            <person name="Utterback T.R."/>
            <person name="Radune D."/>
            <person name="Ketchum K.A."/>
            <person name="Dougherty B.A."/>
            <person name="Fraser C.M."/>
        </authorList>
    </citation>
    <scope>NUCLEOTIDE SEQUENCE [LARGE SCALE GENOMIC DNA]</scope>
    <source>
        <strain>ATCC 700802 / V583</strain>
    </source>
</reference>
<keyword id="KW-0067">ATP-binding</keyword>
<keyword id="KW-0143">Chaperone</keyword>
<keyword id="KW-0963">Cytoplasm</keyword>
<keyword id="KW-0413">Isomerase</keyword>
<keyword id="KW-0547">Nucleotide-binding</keyword>
<keyword id="KW-1185">Reference proteome</keyword>
<feature type="chain" id="PRO_0000063371" description="Chaperonin GroEL">
    <location>
        <begin position="1"/>
        <end position="541"/>
    </location>
</feature>
<feature type="binding site" evidence="1">
    <location>
        <begin position="29"/>
        <end position="32"/>
    </location>
    <ligand>
        <name>ATP</name>
        <dbReference type="ChEBI" id="CHEBI:30616"/>
    </ligand>
</feature>
<feature type="binding site" evidence="1">
    <location>
        <begin position="86"/>
        <end position="90"/>
    </location>
    <ligand>
        <name>ATP</name>
        <dbReference type="ChEBI" id="CHEBI:30616"/>
    </ligand>
</feature>
<feature type="binding site" evidence="1">
    <location>
        <position position="413"/>
    </location>
    <ligand>
        <name>ATP</name>
        <dbReference type="ChEBI" id="CHEBI:30616"/>
    </ligand>
</feature>
<feature type="binding site" evidence="1">
    <location>
        <begin position="476"/>
        <end position="478"/>
    </location>
    <ligand>
        <name>ATP</name>
        <dbReference type="ChEBI" id="CHEBI:30616"/>
    </ligand>
</feature>
<feature type="binding site" evidence="1">
    <location>
        <position position="492"/>
    </location>
    <ligand>
        <name>ATP</name>
        <dbReference type="ChEBI" id="CHEBI:30616"/>
    </ligand>
</feature>
<feature type="sequence conflict" description="In Ref. 1; AAL04033." evidence="2" ref="1">
    <original>E</original>
    <variation>A</variation>
    <location>
        <position position="176"/>
    </location>
</feature>
<sequence>MAKEIKFAEDARAAMLRGVDVLADTVKVTLGPKGRNVVLEKSFGSPLITNDGVTIAKEIELEDHFENMGAKLVSEVASKTNDIAGDGTTTATVLTQAIVREGLKNVTAGANPLGIRRGIELATKTAVEELHNISSVVDSKEAIAQVAAVSSGSEKVGQLIADAMEKVGNDGVITIEESKGIETELDVVEGMQFDRGYLSQYMVTDNDKMEAVLENPYILITDKKISNIQDILPLLEQILQQSRPLLIIADDVDGEALPTLVLNKIRGTFNVVAVKAPGFGDRRKAMLEDIAILTGGTVITDDLGLELKDTTIENLGNASKVVVDKDNTTIVEGAGSKEAIDARVHLIKNQIGETTSDFDREKLQERLAKLAGGVAVVKVGAATETELKELKLRIEDALNATRAAVEEGMVSGGGTALVNVIGKVAALEAEGDVATGIKIVVRALEEPIRQIAENAGYEGSVIVDKLKNVDLGIGFNAANGEWVNMVEAGIVDPTKVTRSALQNAASVSALLLTTEAVVADKPEPAAPAPMMDPSMGMGGMM</sequence>
<gene>
    <name evidence="1" type="primary">groEL</name>
    <name evidence="1" type="synonym">groL</name>
    <name type="ordered locus">EF_2633</name>
</gene>
<evidence type="ECO:0000255" key="1">
    <source>
        <dbReference type="HAMAP-Rule" id="MF_00600"/>
    </source>
</evidence>
<evidence type="ECO:0000305" key="2"/>
<proteinExistence type="inferred from homology"/>
<organism>
    <name type="scientific">Enterococcus faecalis (strain ATCC 700802 / V583)</name>
    <dbReference type="NCBI Taxonomy" id="226185"/>
    <lineage>
        <taxon>Bacteria</taxon>
        <taxon>Bacillati</taxon>
        <taxon>Bacillota</taxon>
        <taxon>Bacilli</taxon>
        <taxon>Lactobacillales</taxon>
        <taxon>Enterococcaceae</taxon>
        <taxon>Enterococcus</taxon>
    </lineage>
</organism>
<comment type="function">
    <text evidence="1">Together with its co-chaperonin GroES, plays an essential role in assisting protein folding. The GroEL-GroES system forms a nano-cage that allows encapsulation of the non-native substrate proteins and provides a physical environment optimized to promote and accelerate protein folding.</text>
</comment>
<comment type="catalytic activity">
    <reaction evidence="1">
        <text>ATP + H2O + a folded polypeptide = ADP + phosphate + an unfolded polypeptide.</text>
        <dbReference type="EC" id="5.6.1.7"/>
    </reaction>
</comment>
<comment type="subunit">
    <text evidence="1">Forms a cylinder of 14 subunits composed of two heptameric rings stacked back-to-back. Interacts with the co-chaperonin GroES.</text>
</comment>
<comment type="subcellular location">
    <subcellularLocation>
        <location evidence="1">Cytoplasm</location>
    </subcellularLocation>
</comment>
<comment type="similarity">
    <text evidence="1">Belongs to the chaperonin (HSP60) family.</text>
</comment>
<accession>Q93EU6</accession>